<reference key="1">
    <citation type="journal article" date="2000" name="DNA Res.">
        <title>Structural analysis of Arabidopsis thaliana chromosome 3. I. Sequence features of the regions of 4,504,864 bp covered by sixty P1 and TAC clones.</title>
        <authorList>
            <person name="Sato S."/>
            <person name="Nakamura Y."/>
            <person name="Kaneko T."/>
            <person name="Katoh T."/>
            <person name="Asamizu E."/>
            <person name="Tabata S."/>
        </authorList>
    </citation>
    <scope>NUCLEOTIDE SEQUENCE [LARGE SCALE GENOMIC DNA]</scope>
    <source>
        <strain>cv. Columbia</strain>
    </source>
</reference>
<reference key="2">
    <citation type="journal article" date="2000" name="DNA Res.">
        <title>Structural analysis of Arabidopsis thaliana chromosome 3. II. Sequence features of the 4,251,695 bp regions covered by 90 P1, TAC and BAC clones.</title>
        <authorList>
            <person name="Kaneko T."/>
            <person name="Katoh T."/>
            <person name="Sato S."/>
            <person name="Nakamura Y."/>
            <person name="Asamizu E."/>
            <person name="Tabata S."/>
        </authorList>
    </citation>
    <scope>NUCLEOTIDE SEQUENCE [LARGE SCALE GENOMIC DNA]</scope>
    <source>
        <strain>cv. Columbia</strain>
    </source>
</reference>
<reference key="3">
    <citation type="journal article" date="2017" name="Plant J.">
        <title>Araport11: a complete reannotation of the Arabidopsis thaliana reference genome.</title>
        <authorList>
            <person name="Cheng C.Y."/>
            <person name="Krishnakumar V."/>
            <person name="Chan A.P."/>
            <person name="Thibaud-Nissen F."/>
            <person name="Schobel S."/>
            <person name="Town C.D."/>
        </authorList>
    </citation>
    <scope>GENOME REANNOTATION</scope>
    <source>
        <strain>cv. Columbia</strain>
    </source>
</reference>
<dbReference type="EMBL" id="AB022217">
    <property type="protein sequence ID" value="BAB02746.1"/>
    <property type="status" value="ALT_SEQ"/>
    <property type="molecule type" value="Genomic_DNA"/>
</dbReference>
<dbReference type="EMBL" id="AP000373">
    <property type="protein sequence ID" value="BAB02746.1"/>
    <property type="status" value="JOINED"/>
    <property type="molecule type" value="Genomic_DNA"/>
</dbReference>
<dbReference type="EMBL" id="CP002686">
    <property type="protein sequence ID" value="AEE75835.1"/>
    <property type="molecule type" value="Genomic_DNA"/>
</dbReference>
<dbReference type="RefSeq" id="NP_566553.1">
    <property type="nucleotide sequence ID" value="NM_112528.1"/>
</dbReference>
<dbReference type="PaxDb" id="3702-AT3G16555.1"/>
<dbReference type="EnsemblPlants" id="AT3G16555.1">
    <property type="protein sequence ID" value="AT3G16555.1"/>
    <property type="gene ID" value="AT3G16555"/>
</dbReference>
<dbReference type="GeneID" id="820904"/>
<dbReference type="Gramene" id="AT3G16555.1">
    <property type="protein sequence ID" value="AT3G16555.1"/>
    <property type="gene ID" value="AT3G16555"/>
</dbReference>
<dbReference type="KEGG" id="ath:AT3G16555"/>
<dbReference type="Araport" id="AT3G16555"/>
<dbReference type="TAIR" id="AT3G16555"/>
<dbReference type="HOGENOM" id="CLU_034692_2_1_1"/>
<dbReference type="InParanoid" id="Q9LUS9"/>
<dbReference type="OMA" id="PCIYIVR"/>
<dbReference type="PRO" id="PR:Q9LUS9"/>
<dbReference type="Proteomes" id="UP000006548">
    <property type="component" value="Chromosome 3"/>
</dbReference>
<dbReference type="ExpressionAtlas" id="Q9LUS9">
    <property type="expression patterns" value="baseline and differential"/>
</dbReference>
<dbReference type="CDD" id="cd22157">
    <property type="entry name" value="F-box_AtFBW1-like"/>
    <property type="match status" value="1"/>
</dbReference>
<dbReference type="Gene3D" id="1.20.1280.50">
    <property type="match status" value="1"/>
</dbReference>
<dbReference type="InterPro" id="IPR050233">
    <property type="entry name" value="A_thaliana_F-box"/>
</dbReference>
<dbReference type="InterPro" id="IPR006527">
    <property type="entry name" value="F-box-assoc_dom_typ1"/>
</dbReference>
<dbReference type="InterPro" id="IPR017451">
    <property type="entry name" value="F-box-assoc_interact_dom"/>
</dbReference>
<dbReference type="InterPro" id="IPR036047">
    <property type="entry name" value="F-box-like_dom_sf"/>
</dbReference>
<dbReference type="InterPro" id="IPR001810">
    <property type="entry name" value="F-box_dom"/>
</dbReference>
<dbReference type="NCBIfam" id="TIGR01640">
    <property type="entry name" value="F_box_assoc_1"/>
    <property type="match status" value="1"/>
</dbReference>
<dbReference type="PANTHER" id="PTHR47993:SF181">
    <property type="entry name" value="F-BOX ONLY PROTEIN 10-RELATED"/>
    <property type="match status" value="1"/>
</dbReference>
<dbReference type="PANTHER" id="PTHR47993">
    <property type="entry name" value="OS09G0372900 PROTEIN-RELATED"/>
    <property type="match status" value="1"/>
</dbReference>
<dbReference type="Pfam" id="PF00646">
    <property type="entry name" value="F-box"/>
    <property type="match status" value="1"/>
</dbReference>
<dbReference type="Pfam" id="PF07734">
    <property type="entry name" value="FBA_1"/>
    <property type="match status" value="1"/>
</dbReference>
<dbReference type="SMART" id="SM00256">
    <property type="entry name" value="FBOX"/>
    <property type="match status" value="1"/>
</dbReference>
<dbReference type="SUPFAM" id="SSF81383">
    <property type="entry name" value="F-box domain"/>
    <property type="match status" value="1"/>
</dbReference>
<dbReference type="PROSITE" id="PS50181">
    <property type="entry name" value="FBOX"/>
    <property type="match status" value="1"/>
</dbReference>
<proteinExistence type="predicted"/>
<protein>
    <recommendedName>
        <fullName>Putative F-box/LRR-repeat protein At3g16555</fullName>
    </recommendedName>
</protein>
<comment type="sequence caution" evidence="2">
    <conflict type="erroneous gene model prediction">
        <sequence resource="EMBL-CDS" id="BAB02746"/>
    </conflict>
</comment>
<sequence>MVLLPWELEEDILSRLPPRSLVQFRSVCKRWNALFDVKSFNKDQFARARPQFIFITDSKIYSIEIIGLDGVDPTIKLHVLDSSGIPYREWKFAYLTITACDGRWIKWIEYENKGFNVCGVGYDNTRPEKVYKILEYLECRREESSNACYQRVAIYECASHAFKFIDTSNKVWFISDVQRYSVCLNGNLYWLSFDDFRILCFDFSREIVKPFCLLPCRKFDKCDLLALQVFKGDRLSLLNQCCKTRTIEIWVTKKKIDSSNNNGSDEVVWISLLTLPPNNLPNLFIVCYGISYFIYDKTTLIIYCEDENTSAACIYIIRGDLFKKFEIDSSAFFCYHCVYAPNFIPLPLM</sequence>
<organism>
    <name type="scientific">Arabidopsis thaliana</name>
    <name type="common">Mouse-ear cress</name>
    <dbReference type="NCBI Taxonomy" id="3702"/>
    <lineage>
        <taxon>Eukaryota</taxon>
        <taxon>Viridiplantae</taxon>
        <taxon>Streptophyta</taxon>
        <taxon>Embryophyta</taxon>
        <taxon>Tracheophyta</taxon>
        <taxon>Spermatophyta</taxon>
        <taxon>Magnoliopsida</taxon>
        <taxon>eudicotyledons</taxon>
        <taxon>Gunneridae</taxon>
        <taxon>Pentapetalae</taxon>
        <taxon>rosids</taxon>
        <taxon>malvids</taxon>
        <taxon>Brassicales</taxon>
        <taxon>Brassicaceae</taxon>
        <taxon>Camelineae</taxon>
        <taxon>Arabidopsis</taxon>
    </lineage>
</organism>
<keyword id="KW-0433">Leucine-rich repeat</keyword>
<keyword id="KW-1185">Reference proteome</keyword>
<evidence type="ECO:0000255" key="1">
    <source>
        <dbReference type="PROSITE-ProRule" id="PRU00080"/>
    </source>
</evidence>
<evidence type="ECO:0000305" key="2"/>
<accession>Q9LUS9</accession>
<accession>F4J2Q3</accession>
<name>FBL44_ARATH</name>
<feature type="chain" id="PRO_0000281945" description="Putative F-box/LRR-repeat protein At3g16555">
    <location>
        <begin position="1"/>
        <end position="349"/>
    </location>
</feature>
<feature type="domain" description="F-box" evidence="1">
    <location>
        <begin position="1"/>
        <end position="48"/>
    </location>
</feature>
<feature type="repeat" description="LRR">
    <location>
        <begin position="267"/>
        <end position="290"/>
    </location>
</feature>
<gene>
    <name type="ordered locus">At3g16555</name>
    <name type="ORF">MDC8.20</name>
</gene>